<dbReference type="EC" id="1.-.-.-" evidence="8"/>
<dbReference type="EMBL" id="HG970334">
    <property type="protein sequence ID" value="CEF85934.1"/>
    <property type="molecule type" value="Genomic_DNA"/>
</dbReference>
<dbReference type="RefSeq" id="XP_011323662.1">
    <property type="nucleotide sequence ID" value="XM_011325360.1"/>
</dbReference>
<dbReference type="SMR" id="I1RMG9"/>
<dbReference type="FunCoup" id="I1RMG9">
    <property type="interactions" value="719"/>
</dbReference>
<dbReference type="STRING" id="229533.I1RMG9"/>
<dbReference type="GlyCosmos" id="I1RMG9">
    <property type="glycosylation" value="7 sites, No reported glycans"/>
</dbReference>
<dbReference type="KEGG" id="fgr:FGSG_05159"/>
<dbReference type="VEuPathDB" id="FungiDB:FGRAMPH1_01G17241"/>
<dbReference type="eggNOG" id="KOG1263">
    <property type="taxonomic scope" value="Eukaryota"/>
</dbReference>
<dbReference type="HOGENOM" id="CLU_006504_7_3_1"/>
<dbReference type="InParanoid" id="I1RMG9"/>
<dbReference type="OrthoDB" id="19816at110618"/>
<dbReference type="PHI-base" id="PHI:1011"/>
<dbReference type="Proteomes" id="UP000070720">
    <property type="component" value="Chromosome 3"/>
</dbReference>
<dbReference type="GO" id="GO:0033573">
    <property type="term" value="C:high-affinity iron permease complex"/>
    <property type="evidence" value="ECO:0007669"/>
    <property type="project" value="TreeGrafter"/>
</dbReference>
<dbReference type="GO" id="GO:0005507">
    <property type="term" value="F:copper ion binding"/>
    <property type="evidence" value="ECO:0007669"/>
    <property type="project" value="InterPro"/>
</dbReference>
<dbReference type="GO" id="GO:0004322">
    <property type="term" value="F:ferroxidase activity"/>
    <property type="evidence" value="ECO:0007669"/>
    <property type="project" value="TreeGrafter"/>
</dbReference>
<dbReference type="GO" id="GO:0010106">
    <property type="term" value="P:cellular response to iron ion starvation"/>
    <property type="evidence" value="ECO:0007669"/>
    <property type="project" value="TreeGrafter"/>
</dbReference>
<dbReference type="GO" id="GO:0033215">
    <property type="term" value="P:reductive iron assimilation"/>
    <property type="evidence" value="ECO:0007669"/>
    <property type="project" value="TreeGrafter"/>
</dbReference>
<dbReference type="CDD" id="cd13851">
    <property type="entry name" value="CuRO_1_Fet3p"/>
    <property type="match status" value="1"/>
</dbReference>
<dbReference type="CDD" id="cd13877">
    <property type="entry name" value="CuRO_2_Fet3p_like"/>
    <property type="match status" value="1"/>
</dbReference>
<dbReference type="CDD" id="cd13899">
    <property type="entry name" value="CuRO_3_Fet3p"/>
    <property type="match status" value="1"/>
</dbReference>
<dbReference type="FunFam" id="2.60.40.420:FF:000022">
    <property type="entry name" value="FET5p Multicopper oxidase"/>
    <property type="match status" value="1"/>
</dbReference>
<dbReference type="FunFam" id="2.60.40.420:FF:000024">
    <property type="entry name" value="FET5p Multicopper oxidase"/>
    <property type="match status" value="1"/>
</dbReference>
<dbReference type="FunFam" id="2.60.40.420:FF:000025">
    <property type="entry name" value="FET5p Multicopper oxidase"/>
    <property type="match status" value="1"/>
</dbReference>
<dbReference type="Gene3D" id="2.60.40.420">
    <property type="entry name" value="Cupredoxins - blue copper proteins"/>
    <property type="match status" value="3"/>
</dbReference>
<dbReference type="InterPro" id="IPR011707">
    <property type="entry name" value="Cu-oxidase-like_N"/>
</dbReference>
<dbReference type="InterPro" id="IPR001117">
    <property type="entry name" value="Cu-oxidase_2nd"/>
</dbReference>
<dbReference type="InterPro" id="IPR011706">
    <property type="entry name" value="Cu-oxidase_C"/>
</dbReference>
<dbReference type="InterPro" id="IPR045087">
    <property type="entry name" value="Cu-oxidase_fam"/>
</dbReference>
<dbReference type="InterPro" id="IPR033138">
    <property type="entry name" value="Cu_oxidase_CS"/>
</dbReference>
<dbReference type="InterPro" id="IPR002355">
    <property type="entry name" value="Cu_oxidase_Cu_BS"/>
</dbReference>
<dbReference type="InterPro" id="IPR008972">
    <property type="entry name" value="Cupredoxin"/>
</dbReference>
<dbReference type="InterPro" id="IPR044130">
    <property type="entry name" value="CuRO_2_Fet3-like"/>
</dbReference>
<dbReference type="PANTHER" id="PTHR11709:SF361">
    <property type="entry name" value="IRON TRANSPORT MULTICOPPER OXIDASE FET3"/>
    <property type="match status" value="1"/>
</dbReference>
<dbReference type="PANTHER" id="PTHR11709">
    <property type="entry name" value="MULTI-COPPER OXIDASE"/>
    <property type="match status" value="1"/>
</dbReference>
<dbReference type="Pfam" id="PF00394">
    <property type="entry name" value="Cu-oxidase"/>
    <property type="match status" value="1"/>
</dbReference>
<dbReference type="Pfam" id="PF07731">
    <property type="entry name" value="Cu-oxidase_2"/>
    <property type="match status" value="1"/>
</dbReference>
<dbReference type="Pfam" id="PF07732">
    <property type="entry name" value="Cu-oxidase_3"/>
    <property type="match status" value="1"/>
</dbReference>
<dbReference type="SUPFAM" id="SSF49503">
    <property type="entry name" value="Cupredoxins"/>
    <property type="match status" value="3"/>
</dbReference>
<dbReference type="PROSITE" id="PS00079">
    <property type="entry name" value="MULTICOPPER_OXIDASE1"/>
    <property type="match status" value="2"/>
</dbReference>
<dbReference type="PROSITE" id="PS00080">
    <property type="entry name" value="MULTICOPPER_OXIDASE2"/>
    <property type="match status" value="1"/>
</dbReference>
<keyword id="KW-1003">Cell membrane</keyword>
<keyword id="KW-0186">Copper</keyword>
<keyword id="KW-0325">Glycoprotein</keyword>
<keyword id="KW-0406">Ion transport</keyword>
<keyword id="KW-0408">Iron</keyword>
<keyword id="KW-0410">Iron transport</keyword>
<keyword id="KW-0472">Membrane</keyword>
<keyword id="KW-0479">Metal-binding</keyword>
<keyword id="KW-0560">Oxidoreductase</keyword>
<keyword id="KW-1185">Reference proteome</keyword>
<keyword id="KW-0677">Repeat</keyword>
<keyword id="KW-0732">Signal</keyword>
<keyword id="KW-0812">Transmembrane</keyword>
<keyword id="KW-1133">Transmembrane helix</keyword>
<keyword id="KW-0813">Transport</keyword>
<comment type="function">
    <text evidence="1 5">Cell surface ferroxidase; part of the reductive iron assimilatory system (RIA), a siderophore-independent iron acquisition process (PubMed:20507510). Required to oxidize Fe(2+) and release it from the transporter (By similarity). Seems not to be involved in virulence (PubMed:20507510).</text>
</comment>
<comment type="subcellular location">
    <subcellularLocation>
        <location evidence="1">Cell membrane</location>
        <topology evidence="1">Single-pass type I membrane protein</topology>
        <orientation evidence="1">Extracellular side</orientation>
    </subcellularLocation>
</comment>
<comment type="induction">
    <text evidence="5">Expression is up-regulated during iron starvation (PubMed:20507510).</text>
</comment>
<comment type="disruption phenotype">
    <text evidence="5">Produces wild-type amounts of siderophores and growth at the same rate as the wild-type under iron limitation, but accumulates high levels of free intracellular iron (PubMed:20507510). Does not affect the virulence (PubMed:20507510).</text>
</comment>
<comment type="similarity">
    <text evidence="7">Belongs to the multicopper oxidase family.</text>
</comment>
<reference key="1">
    <citation type="journal article" date="2007" name="Science">
        <title>The Fusarium graminearum genome reveals a link between localized polymorphism and pathogen specialization.</title>
        <authorList>
            <person name="Cuomo C.A."/>
            <person name="Gueldener U."/>
            <person name="Xu J.-R."/>
            <person name="Trail F."/>
            <person name="Turgeon B.G."/>
            <person name="Di Pietro A."/>
            <person name="Walton J.D."/>
            <person name="Ma L.-J."/>
            <person name="Baker S.E."/>
            <person name="Rep M."/>
            <person name="Adam G."/>
            <person name="Antoniw J."/>
            <person name="Baldwin T."/>
            <person name="Calvo S.E."/>
            <person name="Chang Y.-L."/>
            <person name="DeCaprio D."/>
            <person name="Gale L.R."/>
            <person name="Gnerre S."/>
            <person name="Goswami R.S."/>
            <person name="Hammond-Kosack K."/>
            <person name="Harris L.J."/>
            <person name="Hilburn K."/>
            <person name="Kennell J.C."/>
            <person name="Kroken S."/>
            <person name="Magnuson J.K."/>
            <person name="Mannhaupt G."/>
            <person name="Mauceli E.W."/>
            <person name="Mewes H.-W."/>
            <person name="Mitterbauer R."/>
            <person name="Muehlbauer G."/>
            <person name="Muensterkoetter M."/>
            <person name="Nelson D."/>
            <person name="O'Donnell K."/>
            <person name="Ouellet T."/>
            <person name="Qi W."/>
            <person name="Quesneville H."/>
            <person name="Roncero M.I.G."/>
            <person name="Seong K.-Y."/>
            <person name="Tetko I.V."/>
            <person name="Urban M."/>
            <person name="Waalwijk C."/>
            <person name="Ward T.J."/>
            <person name="Yao J."/>
            <person name="Birren B.W."/>
            <person name="Kistler H.C."/>
        </authorList>
    </citation>
    <scope>NUCLEOTIDE SEQUENCE [LARGE SCALE GENOMIC DNA]</scope>
    <source>
        <strain>ATCC MYA-4620 / CBS 123657 / FGSC 9075 / NRRL 31084 / PH-1</strain>
    </source>
</reference>
<reference key="2">
    <citation type="journal article" date="2010" name="Nature">
        <title>Comparative genomics reveals mobile pathogenicity chromosomes in Fusarium.</title>
        <authorList>
            <person name="Ma L.-J."/>
            <person name="van der Does H.C."/>
            <person name="Borkovich K.A."/>
            <person name="Coleman J.J."/>
            <person name="Daboussi M.-J."/>
            <person name="Di Pietro A."/>
            <person name="Dufresne M."/>
            <person name="Freitag M."/>
            <person name="Grabherr M."/>
            <person name="Henrissat B."/>
            <person name="Houterman P.M."/>
            <person name="Kang S."/>
            <person name="Shim W.-B."/>
            <person name="Woloshuk C."/>
            <person name="Xie X."/>
            <person name="Xu J.-R."/>
            <person name="Antoniw J."/>
            <person name="Baker S.E."/>
            <person name="Bluhm B.H."/>
            <person name="Breakspear A."/>
            <person name="Brown D.W."/>
            <person name="Butchko R.A.E."/>
            <person name="Chapman S."/>
            <person name="Coulson R."/>
            <person name="Coutinho P.M."/>
            <person name="Danchin E.G.J."/>
            <person name="Diener A."/>
            <person name="Gale L.R."/>
            <person name="Gardiner D.M."/>
            <person name="Goff S."/>
            <person name="Hammond-Kosack K.E."/>
            <person name="Hilburn K."/>
            <person name="Hua-Van A."/>
            <person name="Jonkers W."/>
            <person name="Kazan K."/>
            <person name="Kodira C.D."/>
            <person name="Koehrsen M."/>
            <person name="Kumar L."/>
            <person name="Lee Y.-H."/>
            <person name="Li L."/>
            <person name="Manners J.M."/>
            <person name="Miranda-Saavedra D."/>
            <person name="Mukherjee M."/>
            <person name="Park G."/>
            <person name="Park J."/>
            <person name="Park S.-Y."/>
            <person name="Proctor R.H."/>
            <person name="Regev A."/>
            <person name="Ruiz-Roldan M.C."/>
            <person name="Sain D."/>
            <person name="Sakthikumar S."/>
            <person name="Sykes S."/>
            <person name="Schwartz D.C."/>
            <person name="Turgeon B.G."/>
            <person name="Wapinski I."/>
            <person name="Yoder O."/>
            <person name="Young S."/>
            <person name="Zeng Q."/>
            <person name="Zhou S."/>
            <person name="Galagan J."/>
            <person name="Cuomo C.A."/>
            <person name="Kistler H.C."/>
            <person name="Rep M."/>
        </authorList>
    </citation>
    <scope>GENOME REANNOTATION</scope>
    <source>
        <strain>ATCC MYA-4620 / CBS 123657 / FGSC 9075 / NRRL 31084 / PH-1</strain>
    </source>
</reference>
<reference key="3">
    <citation type="journal article" date="2015" name="BMC Genomics">
        <title>The completed genome sequence of the pathogenic ascomycete fungus Fusarium graminearum.</title>
        <authorList>
            <person name="King R."/>
            <person name="Urban M."/>
            <person name="Hammond-Kosack M.C.U."/>
            <person name="Hassani-Pak K."/>
            <person name="Hammond-Kosack K.E."/>
        </authorList>
    </citation>
    <scope>NUCLEOTIDE SEQUENCE [LARGE SCALE GENOMIC DNA]</scope>
    <source>
        <strain>ATCC MYA-4620 / CBS 123657 / FGSC 9075 / NRRL 31084 / PH-1</strain>
    </source>
</reference>
<reference key="4">
    <citation type="journal article" date="2007" name="Mol. Plant Pathol.">
        <title>The siderophore biosynthetic gene SID1, but not the ferroxidase gene FET3, is required for full Fusarium graminearum virulence.</title>
        <authorList>
            <person name="Greenshields D.L."/>
            <person name="Liu G."/>
            <person name="Feng J."/>
            <person name="Selvaraj G."/>
            <person name="Wei Y."/>
        </authorList>
    </citation>
    <scope>FUNCTION</scope>
    <scope>INDUCTION</scope>
    <scope>DISRUPTION PHENOTYPE</scope>
</reference>
<evidence type="ECO:0000250" key="1">
    <source>
        <dbReference type="UniProtKB" id="P38993"/>
    </source>
</evidence>
<evidence type="ECO:0000255" key="2"/>
<evidence type="ECO:0000255" key="3">
    <source>
        <dbReference type="PROSITE-ProRule" id="PRU00498"/>
    </source>
</evidence>
<evidence type="ECO:0000256" key="4">
    <source>
        <dbReference type="SAM" id="MobiDB-lite"/>
    </source>
</evidence>
<evidence type="ECO:0000269" key="5">
    <source>
    </source>
</evidence>
<evidence type="ECO:0000303" key="6">
    <source>
    </source>
</evidence>
<evidence type="ECO:0000305" key="7"/>
<evidence type="ECO:0000305" key="8">
    <source>
    </source>
</evidence>
<accession>I1RMG9</accession>
<gene>
    <name evidence="6" type="primary">FET3</name>
    <name type="ORF">FG05159</name>
    <name type="ORF">FGRAMPH1_01T17241</name>
</gene>
<protein>
    <recommendedName>
        <fullName evidence="1">Iron transport multicopper oxidase FET3</fullName>
        <ecNumber evidence="8">1.-.-.-</ecNumber>
    </recommendedName>
    <alternativeName>
        <fullName evidence="6">Cell surface ferroxidase FET3</fullName>
    </alternativeName>
</protein>
<feature type="signal peptide" evidence="2">
    <location>
        <begin position="1"/>
        <end position="22"/>
    </location>
</feature>
<feature type="chain" id="PRO_5010124403" description="Iron transport multicopper oxidase FET3" evidence="2">
    <location>
        <begin position="23"/>
        <end position="622"/>
    </location>
</feature>
<feature type="topological domain" description="Extracellular" evidence="2">
    <location>
        <begin position="23"/>
        <end position="553"/>
    </location>
</feature>
<feature type="transmembrane region" description="Helical" evidence="2">
    <location>
        <begin position="554"/>
        <end position="574"/>
    </location>
</feature>
<feature type="topological domain" description="Cytoplasmic" evidence="2">
    <location>
        <begin position="575"/>
        <end position="622"/>
    </location>
</feature>
<feature type="domain" description="Plastocyanin-like 1" evidence="2">
    <location>
        <begin position="31"/>
        <end position="146"/>
    </location>
</feature>
<feature type="domain" description="Plastocyanin-like 2" evidence="2">
    <location>
        <begin position="156"/>
        <end position="303"/>
    </location>
</feature>
<feature type="domain" description="Plastocyanin-like 3" evidence="2">
    <location>
        <begin position="363"/>
        <end position="498"/>
    </location>
</feature>
<feature type="region of interest" description="Disordered" evidence="4">
    <location>
        <begin position="597"/>
        <end position="622"/>
    </location>
</feature>
<feature type="binding site" description="type 2 copper site" evidence="1">
    <location>
        <position position="82"/>
    </location>
    <ligand>
        <name>Cu cation</name>
        <dbReference type="ChEBI" id="CHEBI:23378"/>
        <label>1</label>
    </ligand>
</feature>
<feature type="binding site" description="type 3 copper site" evidence="1">
    <location>
        <position position="84"/>
    </location>
    <ligand>
        <name>Cu cation</name>
        <dbReference type="ChEBI" id="CHEBI:23378"/>
        <label>2</label>
    </ligand>
</feature>
<feature type="binding site" description="type 3 copper site" evidence="1">
    <location>
        <position position="126"/>
    </location>
    <ligand>
        <name>Cu cation</name>
        <dbReference type="ChEBI" id="CHEBI:23378"/>
        <label>2</label>
    </ligand>
</feature>
<feature type="binding site" description="type 3 copper site" evidence="1">
    <location>
        <position position="128"/>
    </location>
    <ligand>
        <name>Cu cation</name>
        <dbReference type="ChEBI" id="CHEBI:23378"/>
        <label>3</label>
    </ligand>
</feature>
<feature type="binding site" description="type 1 copper site" evidence="1">
    <location>
        <position position="414"/>
    </location>
    <ligand>
        <name>Cu cation</name>
        <dbReference type="ChEBI" id="CHEBI:23378"/>
        <label>4</label>
    </ligand>
</feature>
<feature type="binding site" description="type 2 copper site" evidence="1">
    <location>
        <position position="417"/>
    </location>
    <ligand>
        <name>Cu cation</name>
        <dbReference type="ChEBI" id="CHEBI:23378"/>
        <label>1</label>
    </ligand>
</feature>
<feature type="binding site" description="type 3 copper site" evidence="1">
    <location>
        <position position="419"/>
    </location>
    <ligand>
        <name>Cu cation</name>
        <dbReference type="ChEBI" id="CHEBI:23378"/>
        <label>3</label>
    </ligand>
</feature>
<feature type="binding site" description="type 3 copper site" evidence="1">
    <location>
        <position position="479"/>
    </location>
    <ligand>
        <name>Cu cation</name>
        <dbReference type="ChEBI" id="CHEBI:23378"/>
        <label>3</label>
    </ligand>
</feature>
<feature type="binding site" description="type 1 copper site" evidence="1">
    <location>
        <position position="480"/>
    </location>
    <ligand>
        <name>Cu cation</name>
        <dbReference type="ChEBI" id="CHEBI:23378"/>
        <label>4</label>
    </ligand>
</feature>
<feature type="binding site" description="type 3 copper site" evidence="1">
    <location>
        <position position="481"/>
    </location>
    <ligand>
        <name>Cu cation</name>
        <dbReference type="ChEBI" id="CHEBI:23378"/>
        <label>2</label>
    </ligand>
</feature>
<feature type="binding site" description="type 1 copper site" evidence="1">
    <location>
        <position position="485"/>
    </location>
    <ligand>
        <name>Cu cation</name>
        <dbReference type="ChEBI" id="CHEBI:23378"/>
        <label>4</label>
    </ligand>
</feature>
<feature type="glycosylation site" description="N-linked (GlcNAc...) asparagine" evidence="3">
    <location>
        <position position="76"/>
    </location>
</feature>
<feature type="glycosylation site" description="N-linked (GlcNAc...) asparagine" evidence="3">
    <location>
        <position position="89"/>
    </location>
</feature>
<feature type="glycosylation site" description="N-linked (GlcNAc...) asparagine" evidence="3">
    <location>
        <position position="114"/>
    </location>
</feature>
<feature type="glycosylation site" description="N-linked (GlcNAc...) asparagine" evidence="3">
    <location>
        <position position="196"/>
    </location>
</feature>
<feature type="glycosylation site" description="N-linked (GlcNAc...) asparagine" evidence="3">
    <location>
        <position position="200"/>
    </location>
</feature>
<feature type="glycosylation site" description="N-linked (GlcNAc...) asparagine" evidence="3">
    <location>
        <position position="294"/>
    </location>
</feature>
<feature type="glycosylation site" description="N-linked (GlcNAc...) asparagine" evidence="3">
    <location>
        <position position="440"/>
    </location>
</feature>
<name>FET3_GIBZE</name>
<sequence>MRPKLLSVEAALFLALPELARAATRKFDFEIGWVRANPDNAFERPVIGINGQWPIPTIEVDIGDRVIINAHNNLGNQSTSLHFHGLYMNGSTHMDGPAGVSQCPIIPGTSFTYNFTVDQPGTYWYHSHTAAQYPDGLRGPFIVHDKDFPYAKKYDEEVVLTLSDWYHDEMRSLIPQFMAKSNPSGAEPVPKNALMNETTNFTMSVQPEKTYLFRVINVGAFAGQYLWFEGHKMQIVEVDGIYTEEAEAEMIYISAAQRVSFLLTTKKDTSKNFPIVASMDTTLFDVLPPDLKYNSTGWLVYDKKAEKPVPATVDSLNPFDDMTLVPYDKMEILGKPDKEVVLDVKMDNLKDGKNYAFFNDITYTEAKVPTLYTALSAGKDAEDPAVYGTYTHSMVLKKNEIVQLVVNNLDSGRHPFHLHGHAFQSVYRSEEEAGIWADANVTEKNLPKTPMRRDTLVIYPNGNIVMRFKADNPGVWLFHCHIEWHVISGLIATFVEDPLALQETIEIPKNHLDACAAANMPTKGNAAANTEDFLDLTGENKPANTLPPGFTPRGIVALVFSCICGILGVAVVAWYGFSAPVGSTSAGALSAGLVENDSGDVHSAQKGPQETVVSPTGDARSH</sequence>
<proteinExistence type="evidence at transcript level"/>
<organism>
    <name type="scientific">Gibberella zeae (strain ATCC MYA-4620 / CBS 123657 / FGSC 9075 / NRRL 31084 / PH-1)</name>
    <name type="common">Wheat head blight fungus</name>
    <name type="synonym">Fusarium graminearum</name>
    <dbReference type="NCBI Taxonomy" id="229533"/>
    <lineage>
        <taxon>Eukaryota</taxon>
        <taxon>Fungi</taxon>
        <taxon>Dikarya</taxon>
        <taxon>Ascomycota</taxon>
        <taxon>Pezizomycotina</taxon>
        <taxon>Sordariomycetes</taxon>
        <taxon>Hypocreomycetidae</taxon>
        <taxon>Hypocreales</taxon>
        <taxon>Nectriaceae</taxon>
        <taxon>Fusarium</taxon>
    </lineage>
</organism>